<gene>
    <name type="primary">gag</name>
</gene>
<evidence type="ECO:0000250" key="1">
    <source>
        <dbReference type="UniProtKB" id="P03332"/>
    </source>
</evidence>
<evidence type="ECO:0000250" key="2">
    <source>
        <dbReference type="UniProtKB" id="P26807"/>
    </source>
</evidence>
<evidence type="ECO:0000255" key="3"/>
<evidence type="ECO:0000255" key="4">
    <source>
        <dbReference type="PROSITE-ProRule" id="PRU00047"/>
    </source>
</evidence>
<evidence type="ECO:0000256" key="5">
    <source>
        <dbReference type="SAM" id="MobiDB-lite"/>
    </source>
</evidence>
<evidence type="ECO:0000269" key="6">
    <source>
    </source>
</evidence>
<evidence type="ECO:0000269" key="7">
    <source>
    </source>
</evidence>
<evidence type="ECO:0007829" key="8">
    <source>
        <dbReference type="PDB" id="1U7K"/>
    </source>
</evidence>
<feature type="initiator methionine" description="Removed; by host" evidence="3">
    <location>
        <position position="1"/>
    </location>
</feature>
<feature type="chain" id="PRO_0000390806" description="Gag polyprotein">
    <location>
        <begin position="2"/>
        <end position="537"/>
    </location>
</feature>
<feature type="chain" id="PRO_0000040876" description="Matrix protein p15">
    <location>
        <begin position="2"/>
        <end position="129"/>
    </location>
</feature>
<feature type="chain" id="PRO_0000040877" description="RNA-binding phosphoprotein p12">
    <location>
        <begin position="130"/>
        <end position="214"/>
    </location>
</feature>
<feature type="chain" id="PRO_0000040878" description="Capsid protein p30">
    <location>
        <begin position="215"/>
        <end position="477"/>
    </location>
</feature>
<feature type="chain" id="PRO_0000040879" description="Nucleocapsid protein p10-gag">
    <location>
        <begin position="478"/>
        <end position="537"/>
    </location>
</feature>
<feature type="zinc finger region" description="CCHC-type" evidence="4">
    <location>
        <begin position="501"/>
        <end position="518"/>
    </location>
</feature>
<feature type="region of interest" description="Disordered" evidence="5">
    <location>
        <begin position="107"/>
        <end position="217"/>
    </location>
</feature>
<feature type="region of interest" description="Interaction with host PIAS4" evidence="1">
    <location>
        <begin position="344"/>
        <end position="392"/>
    </location>
</feature>
<feature type="region of interest" description="Interaction with host UBE2I" evidence="1">
    <location>
        <begin position="429"/>
        <end position="434"/>
    </location>
</feature>
<feature type="region of interest" description="Disordered" evidence="5">
    <location>
        <begin position="434"/>
        <end position="537"/>
    </location>
</feature>
<feature type="coiled-coil region" evidence="3">
    <location>
        <begin position="437"/>
        <end position="478"/>
    </location>
</feature>
<feature type="short sequence motif" description="PTAP/PSAP motif" evidence="1">
    <location>
        <begin position="109"/>
        <end position="112"/>
    </location>
</feature>
<feature type="short sequence motif" description="LYPX(n)L motif" evidence="1">
    <location>
        <begin position="128"/>
        <end position="132"/>
    </location>
</feature>
<feature type="short sequence motif" description="PPXY motif" evidence="1">
    <location>
        <begin position="161"/>
        <end position="164"/>
    </location>
</feature>
<feature type="compositionally biased region" description="Basic and acidic residues" evidence="5">
    <location>
        <begin position="434"/>
        <end position="465"/>
    </location>
</feature>
<feature type="compositionally biased region" description="Basic and acidic residues" evidence="5">
    <location>
        <begin position="485"/>
        <end position="518"/>
    </location>
</feature>
<feature type="site" description="Cleavage; by viral protease" evidence="1">
    <location>
        <begin position="129"/>
        <end position="130"/>
    </location>
</feature>
<feature type="site" description="Cleavage; by viral protease" evidence="1">
    <location>
        <begin position="214"/>
        <end position="215"/>
    </location>
</feature>
<feature type="site" description="Cleavage; by viral protease" evidence="1">
    <location>
        <begin position="477"/>
        <end position="478"/>
    </location>
</feature>
<feature type="modified residue" description="Phosphoserine; by host" evidence="1">
    <location>
        <position position="191"/>
    </location>
</feature>
<feature type="lipid moiety-binding region" description="N-myristoyl glycine; by host" evidence="3">
    <location>
        <position position="2"/>
    </location>
</feature>
<feature type="strand" evidence="8">
    <location>
        <begin position="216"/>
        <end position="218"/>
    </location>
</feature>
<feature type="strand" evidence="8">
    <location>
        <begin position="222"/>
        <end position="226"/>
    </location>
</feature>
<feature type="helix" evidence="8">
    <location>
        <begin position="231"/>
        <end position="239"/>
    </location>
</feature>
<feature type="turn" evidence="8">
    <location>
        <begin position="244"/>
        <end position="246"/>
    </location>
</feature>
<feature type="helix" evidence="8">
    <location>
        <begin position="248"/>
        <end position="261"/>
    </location>
</feature>
<feature type="helix" evidence="8">
    <location>
        <begin position="266"/>
        <end position="276"/>
    </location>
</feature>
<feature type="helix" evidence="8">
    <location>
        <begin position="279"/>
        <end position="291"/>
    </location>
</feature>
<feature type="strand" evidence="8">
    <location>
        <begin position="298"/>
        <end position="300"/>
    </location>
</feature>
<feature type="helix" evidence="8">
    <location>
        <begin position="304"/>
        <end position="310"/>
    </location>
</feature>
<feature type="helix" evidence="8">
    <location>
        <begin position="323"/>
        <end position="344"/>
    </location>
</feature>
<sequence>MGQTVTTPLSLTLEHWEDVQRIASNQSVDVKKRRWVTFCSAEWPTFGVGWPQDGTFNLDIILQVKSKVFSPGPHGHPDQVPYIVTWEAIAYEPPPWVKPFVSPKLSPSPTAPILPSGPSTQPPPRSALYPALTPSIKPRPSKPQVLSDNGGPLIDLLSEDPPPYGGQGLSSSDGDGDREEATSTSEIPAPSPIVSRLRGKRDPPAADSTTSRAFPLRLGGNGQLQYWPFSSSDLYNWKNNNPSFSEDPGKLTALIESVLTTHQPTWDDCQQLLGTLLTGEEKQRVLLEARKAVRGNDGRPTQLPNEVDAAFPLERPDWDYTTQRGRNHLVLYRQLLLAGLQNAGRSPTNLAKVKGITQGPNESPSAFLERLKEAYRRYTPYDPEDPGQETNVSMSFIWQSAPDIGRKLERLEDLKSKTLGDLVREAERIFNKRETPEEREERVRRETEEKEERRRAEEEQKEKERDRRRHREMSKLLATVVSGQRQDRQGGERRRPQLDKDQCAYCKEKGHWAKDCPKKPRGPRGPRPQTSLLTLDD</sequence>
<proteinExistence type="evidence at protein level"/>
<comment type="function">
    <molecule>Gag polyprotein</molecule>
    <text evidence="1">Plays a role in budding and is processed by the viral protease during virion maturation outside the cell. During budding, it recruits, in a PPXY-dependent or independent manner, Nedd4-like ubiquitin ligases that conjugate ubiquitin molecules to Gag, or to Gag binding host factors. Interaction with HECT ubiquitin ligases probably links the viral protein to the host ESCRT pathway and facilitates release.</text>
</comment>
<comment type="function">
    <molecule>Matrix protein p15</molecule>
    <text evidence="1">Targets Gag and gag-pol polyproteins to the plasma membrane via a multipartite membrane binding signal, that includes its myristoylated N-terminus. Also mediates nuclear localization of the pre-integration complex.</text>
</comment>
<comment type="function">
    <molecule>RNA-binding phosphoprotein p12</molecule>
    <text evidence="1">Constituent of the pre-integration complex (PIC) which tethers the latter to mitotic chromosomes.</text>
</comment>
<comment type="function">
    <molecule>Capsid protein p30</molecule>
    <text evidence="1">Forms the spherical core of the virion that encapsulates the genomic RNA-nucleocapsid complex.</text>
</comment>
<comment type="function">
    <molecule>Nucleocapsid protein p10-gag</molecule>
    <text evidence="1">Involved in the packaging and encapsidation of two copies of the genome. Binds with high affinity to conserved UCUG elements within the packaging signal, located near the 5'-end of the genome. This binding is dependent on genome dimerization.</text>
</comment>
<comment type="subunit">
    <molecule>Gag polyprotein</molecule>
    <text evidence="1">Interacts (via PPXY motif) with host NEDD4 (By similarity). Interacts (via PSAP motif) with host TSG101 (By similarity). Interacts (via LYPX(n)L motif) with host PDCD6IP (By similarity).</text>
</comment>
<comment type="subunit">
    <molecule>Capsid protein p30</molecule>
    <text evidence="1 6 7">Homohexamer. Further associates as homomultimer (PubMed:15386017, PubMed:17223564). The virus core is composed of a lattice formed from hexagonal rings, each containing six capsid monomers (PubMed:15386017, PubMed:17223564). Interacts with mouse UBE2I and mouse PIAS4 (By similarity).</text>
</comment>
<comment type="subcellular location">
    <molecule>Gag polyprotein</molecule>
    <subcellularLocation>
        <location evidence="1">Virion</location>
    </subcellularLocation>
    <subcellularLocation>
        <location evidence="1">Host cell membrane</location>
        <topology evidence="1">Lipid-anchor</topology>
    </subcellularLocation>
    <subcellularLocation>
        <location evidence="2">Host endosome</location>
        <location evidence="2">Host multivesicular body</location>
    </subcellularLocation>
</comment>
<comment type="subcellular location">
    <molecule>Matrix protein p15</molecule>
    <subcellularLocation>
        <location evidence="1">Virion</location>
    </subcellularLocation>
</comment>
<comment type="subcellular location">
    <molecule>Capsid protein p30</molecule>
    <subcellularLocation>
        <location evidence="1">Virion</location>
    </subcellularLocation>
</comment>
<comment type="subcellular location">
    <molecule>Nucleocapsid protein p10-gag</molecule>
    <subcellularLocation>
        <location evidence="1">Virion</location>
    </subcellularLocation>
</comment>
<comment type="subcellular location">
    <molecule>RNA-binding phosphoprotein p12</molecule>
    <subcellularLocation>
        <location evidence="1">Host cytoplasm</location>
    </subcellularLocation>
    <text evidence="1">Localizes to the host cytoplasm early in infection and binds to the mitotic chromosomes later on.</text>
</comment>
<comment type="alternative products">
    <event type="alternative initiation"/>
    <isoform>
        <id>P03336-1</id>
        <name>Gag polyprotein</name>
        <sequence type="displayed"/>
    </isoform>
    <isoform>
        <id>P0DOG8-1</id>
        <name>Glyco-Gag protein</name>
        <sequence type="external"/>
    </isoform>
</comment>
<comment type="domain">
    <molecule>Gag polyprotein</molecule>
    <text evidence="1">Late-budding domains (L domains) are short sequence motifs essential for viral particle budding. They recruit proteins of the host ESCRT machinery (Endosomal Sorting Complex Required for Transport) or ESCRT-associated proteins. RNA-binding phosphoprotein p12 contains one L domain: a PPXY motif which interacts with the WW domain 3 of NEDD4 E3 ubiquitin ligase. PPXY motif is essential for virus egress. Matrix protein p15 contains one L domain: a PTAP/PSAP motif, which interacts with the UEV domain of TSG101. The junction between the matrix protein p15 and RNA-binding phosphoprotein p12 also contains one L domain: a LYPX(n)L motif which interacts with PDCD6IP. Both PSAP and LYPX(n)L domains might play little to no role in budding and possibly drive residual virus release.</text>
</comment>
<comment type="PTM">
    <molecule>Gag polyprotein</molecule>
    <text evidence="1">Ubiquitinated by ITCH. Gag can recruit the ubiquitin ligase Itch in an L domain-independent manner to facilitate virus release via a mechanism that involves Gag ubiquitination.</text>
</comment>
<comment type="PTM">
    <molecule>Gag polyprotein</molecule>
    <text evidence="1">Specific enzymatic cleavages by the viral protease yield mature proteins. The protease is released by autocatalytic cleavage. The polyprotein is cleaved during and after budding, this process is termed maturation.</text>
</comment>
<comment type="PTM">
    <molecule>Capsid protein p30</molecule>
    <text evidence="1">Sumoylated; required for virus replication.</text>
</comment>
<comment type="PTM">
    <text evidence="1">RNA-binding phosphoprotein p12 is phosphorylated on serine residues.</text>
</comment>
<name>GAG_MLVAV</name>
<protein>
    <recommendedName>
        <fullName>Gag polyprotein</fullName>
    </recommendedName>
    <alternativeName>
        <fullName>Core polyprotein</fullName>
    </alternativeName>
    <component>
        <recommendedName>
            <fullName>Matrix protein p15</fullName>
            <shortName>MA</shortName>
        </recommendedName>
    </component>
    <component>
        <recommendedName>
            <fullName>RNA-binding phosphoprotein p12</fullName>
        </recommendedName>
        <alternativeName>
            <fullName>pp12</fullName>
        </alternativeName>
    </component>
    <component>
        <recommendedName>
            <fullName>Capsid protein p30</fullName>
            <shortName>CA</shortName>
        </recommendedName>
    </component>
    <component>
        <recommendedName>
            <fullName>Nucleocapsid protein p10-gag</fullName>
            <shortName>NC-gag</shortName>
        </recommendedName>
    </component>
</protein>
<accession>P03336</accession>
<keyword id="KW-0002">3D-structure</keyword>
<keyword id="KW-0024">Alternative initiation</keyword>
<keyword id="KW-0167">Capsid protein</keyword>
<keyword id="KW-0175">Coiled coil</keyword>
<keyword id="KW-1032">Host cell membrane</keyword>
<keyword id="KW-1035">Host cytoplasm</keyword>
<keyword id="KW-1039">Host endosome</keyword>
<keyword id="KW-1043">Host membrane</keyword>
<keyword id="KW-0945">Host-virus interaction</keyword>
<keyword id="KW-0449">Lipoprotein</keyword>
<keyword id="KW-0472">Membrane</keyword>
<keyword id="KW-0479">Metal-binding</keyword>
<keyword id="KW-0519">Myristate</keyword>
<keyword id="KW-0597">Phosphoprotein</keyword>
<keyword id="KW-0694">RNA-binding</keyword>
<keyword id="KW-0832">Ubl conjugation</keyword>
<keyword id="KW-1198">Viral budding</keyword>
<keyword id="KW-1187">Viral budding via the host ESCRT complexes</keyword>
<keyword id="KW-0468">Viral matrix protein</keyword>
<keyword id="KW-0543">Viral nucleoprotein</keyword>
<keyword id="KW-1188">Viral release from host cell</keyword>
<keyword id="KW-0946">Virion</keyword>
<keyword id="KW-0862">Zinc</keyword>
<keyword id="KW-0863">Zinc-finger</keyword>
<dbReference type="EMBL" id="J01998">
    <property type="protein sequence ID" value="AAB03090.1"/>
    <property type="molecule type" value="Genomic_RNA"/>
</dbReference>
<dbReference type="PIR" id="A03933">
    <property type="entry name" value="FOMVGV"/>
</dbReference>
<dbReference type="PDB" id="1U7K">
    <property type="method" value="X-ray"/>
    <property type="resolution" value="1.85 A"/>
    <property type="chains" value="A/B/C/D/E/F=215-345"/>
</dbReference>
<dbReference type="PDB" id="2Y4Z">
    <property type="method" value="X-ray"/>
    <property type="resolution" value="2.00 A"/>
    <property type="chains" value="A=215-346"/>
</dbReference>
<dbReference type="PDB" id="3BP9">
    <property type="method" value="X-ray"/>
    <property type="resolution" value="2.60 A"/>
    <property type="chains" value="A/B/C/D/E/F/G/H/I/J/K/L/M/N/O/P/Q/R/S/T/U/V/X/Y=215-346"/>
</dbReference>
<dbReference type="PDB" id="6HWW">
    <property type="method" value="EM"/>
    <property type="resolution" value="6.60 A"/>
    <property type="chains" value="A/B/C=230-450"/>
</dbReference>
<dbReference type="PDB" id="6HWX">
    <property type="method" value="EM"/>
    <property type="resolution" value="7.20 A"/>
    <property type="chains" value="A/B/C=215-450"/>
</dbReference>
<dbReference type="PDB" id="6HWY">
    <property type="method" value="EM"/>
    <property type="resolution" value="8.60 A"/>
    <property type="chains" value="A/B/C/D=215-450"/>
</dbReference>
<dbReference type="PDBsum" id="1U7K"/>
<dbReference type="PDBsum" id="2Y4Z"/>
<dbReference type="PDBsum" id="3BP9"/>
<dbReference type="PDBsum" id="6HWW"/>
<dbReference type="PDBsum" id="6HWX"/>
<dbReference type="PDBsum" id="6HWY"/>
<dbReference type="SMR" id="P03336"/>
<dbReference type="IntAct" id="P03336">
    <property type="interactions" value="1"/>
</dbReference>
<dbReference type="MINT" id="P03336"/>
<dbReference type="EvolutionaryTrace" id="P03336"/>
<dbReference type="Proteomes" id="UP000008875">
    <property type="component" value="Genome"/>
</dbReference>
<dbReference type="GO" id="GO:0020002">
    <property type="term" value="C:host cell plasma membrane"/>
    <property type="evidence" value="ECO:0007669"/>
    <property type="project" value="UniProtKB-SubCell"/>
</dbReference>
<dbReference type="GO" id="GO:0072494">
    <property type="term" value="C:host multivesicular body"/>
    <property type="evidence" value="ECO:0007669"/>
    <property type="project" value="UniProtKB-SubCell"/>
</dbReference>
<dbReference type="GO" id="GO:0016020">
    <property type="term" value="C:membrane"/>
    <property type="evidence" value="ECO:0007669"/>
    <property type="project" value="UniProtKB-KW"/>
</dbReference>
<dbReference type="GO" id="GO:0019013">
    <property type="term" value="C:viral nucleocapsid"/>
    <property type="evidence" value="ECO:0007669"/>
    <property type="project" value="UniProtKB-KW"/>
</dbReference>
<dbReference type="GO" id="GO:0003723">
    <property type="term" value="F:RNA binding"/>
    <property type="evidence" value="ECO:0007669"/>
    <property type="project" value="UniProtKB-KW"/>
</dbReference>
<dbReference type="GO" id="GO:0039660">
    <property type="term" value="F:structural constituent of virion"/>
    <property type="evidence" value="ECO:0007669"/>
    <property type="project" value="UniProtKB-KW"/>
</dbReference>
<dbReference type="GO" id="GO:0008270">
    <property type="term" value="F:zinc ion binding"/>
    <property type="evidence" value="ECO:0007669"/>
    <property type="project" value="UniProtKB-KW"/>
</dbReference>
<dbReference type="GO" id="GO:0039702">
    <property type="term" value="P:viral budding via host ESCRT complex"/>
    <property type="evidence" value="ECO:0007669"/>
    <property type="project" value="UniProtKB-KW"/>
</dbReference>
<dbReference type="FunFam" id="1.10.375.10:FF:000008">
    <property type="entry name" value="Gag polyprotein"/>
    <property type="match status" value="1"/>
</dbReference>
<dbReference type="Gene3D" id="1.10.150.180">
    <property type="entry name" value="Gamma-retroviral matrix domain"/>
    <property type="match status" value="1"/>
</dbReference>
<dbReference type="Gene3D" id="1.10.375.10">
    <property type="entry name" value="Human Immunodeficiency Virus Type 1 Capsid Protein"/>
    <property type="match status" value="1"/>
</dbReference>
<dbReference type="Gene3D" id="4.10.60.10">
    <property type="entry name" value="Zinc finger, CCHC-type"/>
    <property type="match status" value="1"/>
</dbReference>
<dbReference type="InterPro" id="IPR000840">
    <property type="entry name" value="G_retro_matrix"/>
</dbReference>
<dbReference type="InterPro" id="IPR036946">
    <property type="entry name" value="G_retro_matrix_sf"/>
</dbReference>
<dbReference type="InterPro" id="IPR002079">
    <property type="entry name" value="Gag_p12"/>
</dbReference>
<dbReference type="InterPro" id="IPR003036">
    <property type="entry name" value="Gag_P30"/>
</dbReference>
<dbReference type="InterPro" id="IPR008919">
    <property type="entry name" value="Retrov_capsid_N"/>
</dbReference>
<dbReference type="InterPro" id="IPR050462">
    <property type="entry name" value="Retroviral_Gag-Pol_poly"/>
</dbReference>
<dbReference type="InterPro" id="IPR010999">
    <property type="entry name" value="Retrovr_matrix"/>
</dbReference>
<dbReference type="InterPro" id="IPR001878">
    <property type="entry name" value="Znf_CCHC"/>
</dbReference>
<dbReference type="InterPro" id="IPR036875">
    <property type="entry name" value="Znf_CCHC_sf"/>
</dbReference>
<dbReference type="PANTHER" id="PTHR33166">
    <property type="entry name" value="GAG_P30 DOMAIN-CONTAINING PROTEIN"/>
    <property type="match status" value="1"/>
</dbReference>
<dbReference type="Pfam" id="PF01140">
    <property type="entry name" value="Gag_MA"/>
    <property type="match status" value="1"/>
</dbReference>
<dbReference type="Pfam" id="PF01141">
    <property type="entry name" value="Gag_p12"/>
    <property type="match status" value="1"/>
</dbReference>
<dbReference type="Pfam" id="PF02093">
    <property type="entry name" value="Gag_p30"/>
    <property type="match status" value="1"/>
</dbReference>
<dbReference type="Pfam" id="PF00098">
    <property type="entry name" value="zf-CCHC"/>
    <property type="match status" value="1"/>
</dbReference>
<dbReference type="SMART" id="SM00343">
    <property type="entry name" value="ZnF_C2HC"/>
    <property type="match status" value="1"/>
</dbReference>
<dbReference type="SUPFAM" id="SSF47836">
    <property type="entry name" value="Retroviral matrix proteins"/>
    <property type="match status" value="1"/>
</dbReference>
<dbReference type="SUPFAM" id="SSF47943">
    <property type="entry name" value="Retrovirus capsid protein, N-terminal core domain"/>
    <property type="match status" value="1"/>
</dbReference>
<dbReference type="SUPFAM" id="SSF57756">
    <property type="entry name" value="Retrovirus zinc finger-like domains"/>
    <property type="match status" value="1"/>
</dbReference>
<dbReference type="PROSITE" id="PS50158">
    <property type="entry name" value="ZF_CCHC"/>
    <property type="match status" value="1"/>
</dbReference>
<reference key="1">
    <citation type="journal article" date="1984" name="J. Virol.">
        <title>Nucleotide sequence of AKV murine leukemia virus.</title>
        <authorList>
            <person name="Herr W."/>
        </authorList>
    </citation>
    <scope>NUCLEOTIDE SEQUENCE [GENOMIC RNA]</scope>
</reference>
<reference key="2">
    <citation type="journal article" date="2007" name="Micron">
        <title>Consideration of the three-dimensional structure of core shells (capsids) in spherical retroviruses.</title>
        <authorList>
            <person name="Nermut M.V."/>
            <person name="Mulloy B."/>
        </authorList>
    </citation>
    <scope>SUBUNIT (CAPSID PROTEIN P30)</scope>
</reference>
<reference key="3">
    <citation type="journal article" date="2004" name="Nature">
        <title>High-resolution structure of a retroviral capsid hexameric amino-terminal domain.</title>
        <authorList>
            <person name="Mortuza G.B."/>
            <person name="Haire L.F."/>
            <person name="Stevens A."/>
            <person name="Smerdon S.J."/>
            <person name="Stoye J.P."/>
            <person name="Taylor I.A."/>
        </authorList>
    </citation>
    <scope>X-RAY CRYSTALLOGRAPHY (1.85 ANGSTROMS) OF 215-345</scope>
    <scope>SUBUNIT (CAPSID PROTEIN P30)</scope>
</reference>
<organismHost>
    <name type="scientific">Mus musculus</name>
    <name type="common">Mouse</name>
    <dbReference type="NCBI Taxonomy" id="10090"/>
</organismHost>
<organism>
    <name type="scientific">AKV murine leukemia virus</name>
    <name type="common">AKR (endogenous) murine leukemia virus</name>
    <dbReference type="NCBI Taxonomy" id="11791"/>
    <lineage>
        <taxon>Viruses</taxon>
        <taxon>Riboviria</taxon>
        <taxon>Pararnavirae</taxon>
        <taxon>Artverviricota</taxon>
        <taxon>Revtraviricetes</taxon>
        <taxon>Ortervirales</taxon>
        <taxon>Retroviridae</taxon>
        <taxon>Orthoretrovirinae</taxon>
        <taxon>Gammaretrovirus</taxon>
        <taxon>Murine leukemia virus</taxon>
    </lineage>
</organism>